<accession>Q9HKL4</accession>
<gene>
    <name type="ordered locus">Ta0583</name>
</gene>
<dbReference type="EMBL" id="AL445064">
    <property type="protein sequence ID" value="CAC11723.1"/>
    <property type="molecule type" value="Genomic_DNA"/>
</dbReference>
<dbReference type="RefSeq" id="WP_010901008.1">
    <property type="nucleotide sequence ID" value="NC_002578.1"/>
</dbReference>
<dbReference type="PDB" id="2FSJ">
    <property type="method" value="X-ray"/>
    <property type="resolution" value="1.90 A"/>
    <property type="chains" value="A=1-326"/>
</dbReference>
<dbReference type="PDB" id="2FSK">
    <property type="method" value="X-ray"/>
    <property type="resolution" value="2.10 A"/>
    <property type="chains" value="A/B=1-326"/>
</dbReference>
<dbReference type="PDB" id="2FSN">
    <property type="method" value="X-ray"/>
    <property type="resolution" value="2.90 A"/>
    <property type="chains" value="A/B=1-326"/>
</dbReference>
<dbReference type="PDBsum" id="2FSJ"/>
<dbReference type="PDBsum" id="2FSK"/>
<dbReference type="PDBsum" id="2FSN"/>
<dbReference type="SMR" id="Q9HKL4"/>
<dbReference type="STRING" id="273075.gene:9571803"/>
<dbReference type="PaxDb" id="273075-Ta0583"/>
<dbReference type="EnsemblBacteria" id="CAC11723">
    <property type="protein sequence ID" value="CAC11723"/>
    <property type="gene ID" value="CAC11723"/>
</dbReference>
<dbReference type="KEGG" id="tac:Ta0583"/>
<dbReference type="eggNOG" id="arCOG03062">
    <property type="taxonomic scope" value="Archaea"/>
</dbReference>
<dbReference type="HOGENOM" id="CLU_851534_0_0_2"/>
<dbReference type="InParanoid" id="Q9HKL4"/>
<dbReference type="OrthoDB" id="55553at2157"/>
<dbReference type="EvolutionaryTrace" id="Q9HKL4"/>
<dbReference type="Proteomes" id="UP000001024">
    <property type="component" value="Chromosome"/>
</dbReference>
<dbReference type="GO" id="GO:0005524">
    <property type="term" value="F:ATP binding"/>
    <property type="evidence" value="ECO:0007669"/>
    <property type="project" value="UniProtKB-KW"/>
</dbReference>
<dbReference type="CDD" id="cd24027">
    <property type="entry name" value="ASKHA_NBD_ParM_Ta0583-like"/>
    <property type="match status" value="1"/>
</dbReference>
<dbReference type="Gene3D" id="3.30.420.40">
    <property type="match status" value="2"/>
</dbReference>
<dbReference type="InterPro" id="IPR040607">
    <property type="entry name" value="ALP_N"/>
</dbReference>
<dbReference type="InterPro" id="IPR043129">
    <property type="entry name" value="ATPase_NBD"/>
</dbReference>
<dbReference type="InterPro" id="IPR049067">
    <property type="entry name" value="MreB-like_C"/>
</dbReference>
<dbReference type="Pfam" id="PF17989">
    <property type="entry name" value="ALP_N"/>
    <property type="match status" value="1"/>
</dbReference>
<dbReference type="Pfam" id="PF21522">
    <property type="entry name" value="MreB-like_C"/>
    <property type="match status" value="1"/>
</dbReference>
<dbReference type="SUPFAM" id="SSF53067">
    <property type="entry name" value="Actin-like ATPase domain"/>
    <property type="match status" value="2"/>
</dbReference>
<organism>
    <name type="scientific">Thermoplasma acidophilum (strain ATCC 25905 / DSM 1728 / JCM 9062 / NBRC 15155 / AMRC-C165)</name>
    <dbReference type="NCBI Taxonomy" id="273075"/>
    <lineage>
        <taxon>Archaea</taxon>
        <taxon>Methanobacteriati</taxon>
        <taxon>Thermoplasmatota</taxon>
        <taxon>Thermoplasmata</taxon>
        <taxon>Thermoplasmatales</taxon>
        <taxon>Thermoplasmataceae</taxon>
        <taxon>Thermoplasma</taxon>
    </lineage>
</organism>
<proteinExistence type="evidence at protein level"/>
<reference key="1">
    <citation type="journal article" date="2000" name="Nature">
        <title>The genome sequence of the thermoacidophilic scavenger Thermoplasma acidophilum.</title>
        <authorList>
            <person name="Ruepp A."/>
            <person name="Graml W."/>
            <person name="Santos-Martinez M.-L."/>
            <person name="Koretke K.K."/>
            <person name="Volker C."/>
            <person name="Mewes H.-W."/>
            <person name="Frishman D."/>
            <person name="Stocker S."/>
            <person name="Lupas A.N."/>
            <person name="Baumeister W."/>
        </authorList>
    </citation>
    <scope>NUCLEOTIDE SEQUENCE [LARGE SCALE GENOMIC DNA]</scope>
    <source>
        <strain>ATCC 25905 / DSM 1728 / JCM 9062 / NBRC 15155 / AMRC-C165</strain>
    </source>
</reference>
<reference key="2">
    <citation type="journal article" date="2007" name="J. Bacteriol.">
        <title>An actin homolog of the archaeon Thermoplasma acidophilum that retains the ancient characteristics of eukaryotic actin.</title>
        <authorList>
            <person name="Hara F."/>
            <person name="Yamashiro K."/>
            <person name="Nemoto N."/>
            <person name="Ohta Y."/>
            <person name="Yokobori S."/>
            <person name="Yasunaga T."/>
            <person name="Hisanaga S."/>
            <person name="Yamagishi A."/>
        </authorList>
    </citation>
    <scope>FUNCTION</scope>
    <scope>BIOPHYSICOCHEMICAL PROPERTIES</scope>
    <source>
        <strain>ATCC 25905 / DSM 1728 / JCM 9062 / NBRC 15155 / AMRC-C165</strain>
    </source>
</reference>
<reference key="3">
    <citation type="journal article" date="2006" name="J. Mol. Biol.">
        <title>Crystal structure of an archaeal actin homolog.</title>
        <authorList>
            <person name="Roeben A."/>
            <person name="Kofler C."/>
            <person name="Nagy I."/>
            <person name="Nickell S."/>
            <person name="Hartl F.U."/>
            <person name="Bracher A."/>
        </authorList>
    </citation>
    <scope>X-RAY CRYSTALLOGRAPHY (1.9 ANGSTROMS) IN COMPLEX WITH ADP</scope>
    <scope>FUNCTION</scope>
    <scope>ATPASE ACTIVITY</scope>
    <scope>KINETIC PARAMETERS</scope>
    <source>
        <strain>ATCC 25905 / DSM 1728 / JCM 9062 / NBRC 15155 / AMRC-C165</strain>
    </source>
</reference>
<feature type="chain" id="PRO_0000285695" description="Archaeal actin homolog">
    <location>
        <begin position="1"/>
        <end position="326"/>
    </location>
</feature>
<feature type="binding site">
    <location>
        <begin position="10"/>
        <end position="14"/>
    </location>
    <ligand>
        <name>ATP</name>
        <dbReference type="ChEBI" id="CHEBI:30616"/>
    </ligand>
</feature>
<feature type="binding site">
    <location>
        <position position="179"/>
    </location>
    <ligand>
        <name>ATP</name>
        <dbReference type="ChEBI" id="CHEBI:30616"/>
    </ligand>
</feature>
<feature type="binding site">
    <location>
        <position position="231"/>
    </location>
    <ligand>
        <name>ATP</name>
        <dbReference type="ChEBI" id="CHEBI:30616"/>
    </ligand>
</feature>
<feature type="binding site">
    <location>
        <begin position="285"/>
        <end position="288"/>
    </location>
    <ligand>
        <name>ATP</name>
        <dbReference type="ChEBI" id="CHEBI:30616"/>
    </ligand>
</feature>
<feature type="binding site">
    <location>
        <position position="311"/>
    </location>
    <ligand>
        <name>ATP</name>
        <dbReference type="ChEBI" id="CHEBI:30616"/>
    </ligand>
</feature>
<feature type="strand" evidence="4">
    <location>
        <begin position="2"/>
        <end position="8"/>
    </location>
</feature>
<feature type="strand" evidence="4">
    <location>
        <begin position="10"/>
        <end position="16"/>
    </location>
</feature>
<feature type="helix" evidence="4">
    <location>
        <begin position="18"/>
        <end position="20"/>
    </location>
</feature>
<feature type="strand" evidence="4">
    <location>
        <begin position="22"/>
        <end position="27"/>
    </location>
</feature>
<feature type="strand" evidence="4">
    <location>
        <begin position="29"/>
        <end position="32"/>
    </location>
</feature>
<feature type="turn" evidence="5">
    <location>
        <begin position="40"/>
        <end position="42"/>
    </location>
</feature>
<feature type="strand" evidence="4">
    <location>
        <begin position="46"/>
        <end position="49"/>
    </location>
</feature>
<feature type="strand" evidence="4">
    <location>
        <begin position="52"/>
        <end position="57"/>
    </location>
</feature>
<feature type="helix" evidence="4">
    <location>
        <begin position="58"/>
        <end position="60"/>
    </location>
</feature>
<feature type="strand" evidence="5">
    <location>
        <begin position="63"/>
        <end position="65"/>
    </location>
</feature>
<feature type="strand" evidence="6">
    <location>
        <begin position="75"/>
        <end position="77"/>
    </location>
</feature>
<feature type="turn" evidence="4">
    <location>
        <begin position="78"/>
        <end position="80"/>
    </location>
</feature>
<feature type="helix" evidence="4">
    <location>
        <begin position="81"/>
        <end position="91"/>
    </location>
</feature>
<feature type="strand" evidence="4">
    <location>
        <begin position="100"/>
        <end position="108"/>
    </location>
</feature>
<feature type="helix" evidence="4">
    <location>
        <begin position="110"/>
        <end position="112"/>
    </location>
</feature>
<feature type="helix" evidence="4">
    <location>
        <begin position="113"/>
        <end position="124"/>
    </location>
</feature>
<feature type="strand" evidence="4">
    <location>
        <begin position="127"/>
        <end position="132"/>
    </location>
</feature>
<feature type="helix" evidence="4">
    <location>
        <begin position="134"/>
        <end position="136"/>
    </location>
</feature>
<feature type="strand" evidence="4">
    <location>
        <begin position="138"/>
        <end position="150"/>
    </location>
</feature>
<feature type="helix" evidence="4">
    <location>
        <begin position="153"/>
        <end position="161"/>
    </location>
</feature>
<feature type="strand" evidence="4">
    <location>
        <begin position="169"/>
        <end position="177"/>
    </location>
</feature>
<feature type="strand" evidence="4">
    <location>
        <begin position="182"/>
        <end position="188"/>
    </location>
</feature>
<feature type="turn" evidence="4">
    <location>
        <begin position="189"/>
        <end position="191"/>
    </location>
</feature>
<feature type="helix" evidence="4">
    <location>
        <begin position="196"/>
        <end position="198"/>
    </location>
</feature>
<feature type="strand" evidence="4">
    <location>
        <begin position="200"/>
        <end position="203"/>
    </location>
</feature>
<feature type="helix" evidence="4">
    <location>
        <begin position="206"/>
        <end position="221"/>
    </location>
</feature>
<feature type="helix" evidence="4">
    <location>
        <begin position="227"/>
        <end position="233"/>
    </location>
</feature>
<feature type="strand" evidence="4">
    <location>
        <begin position="238"/>
        <end position="240"/>
    </location>
</feature>
<feature type="strand" evidence="4">
    <location>
        <begin position="243"/>
        <end position="245"/>
    </location>
</feature>
<feature type="helix" evidence="4">
    <location>
        <begin position="248"/>
        <end position="270"/>
    </location>
</feature>
<feature type="helix" evidence="4">
    <location>
        <begin position="271"/>
        <end position="276"/>
    </location>
</feature>
<feature type="strand" evidence="4">
    <location>
        <begin position="277"/>
        <end position="284"/>
    </location>
</feature>
<feature type="helix" evidence="4">
    <location>
        <begin position="287"/>
        <end position="290"/>
    </location>
</feature>
<feature type="helix" evidence="4">
    <location>
        <begin position="291"/>
        <end position="297"/>
    </location>
</feature>
<feature type="turn" evidence="4">
    <location>
        <begin position="307"/>
        <end position="312"/>
    </location>
</feature>
<feature type="helix" evidence="4">
    <location>
        <begin position="313"/>
        <end position="323"/>
    </location>
</feature>
<protein>
    <recommendedName>
        <fullName>Archaeal actin homolog</fullName>
    </recommendedName>
</protein>
<evidence type="ECO:0000269" key="1">
    <source>
    </source>
</evidence>
<evidence type="ECO:0000269" key="2">
    <source>
    </source>
</evidence>
<evidence type="ECO:0000305" key="3"/>
<evidence type="ECO:0007829" key="4">
    <source>
        <dbReference type="PDB" id="2FSJ"/>
    </source>
</evidence>
<evidence type="ECO:0007829" key="5">
    <source>
        <dbReference type="PDB" id="2FSK"/>
    </source>
</evidence>
<evidence type="ECO:0007829" key="6">
    <source>
        <dbReference type="PDB" id="2FSN"/>
    </source>
</evidence>
<sequence>MVVVGLDVGYGDTKVIGVDGKRIIFPSRWAVTETESWGIGGKIPVLSTDGGQTKFIYGKYASGNNIRVPQGDGRLASKEAFPLIAAALWESGIHNDGSPVDLVIGSGTPLGTFDLEVKAAKEALENKVLTVTGPEGEVRQFNITRLIMRPQGVGAALYLLNQGIIEQQPGYGVVIDVGSRTTDVLTINLMDMEPVVELSFSLQIGVGDAISALSRKIAKETGFVVPFDLAQEALSHPVMFRQKQVGGPEVSGPILEDLANRIIENIRLNLRGEVDRVTSLIPVGGGSNLIGDRFEEIAPGTLVKIKPEDLQFANALGYRDAAERSM</sequence>
<name>ACTH_THEAC</name>
<keyword id="KW-0002">3D-structure</keyword>
<keyword id="KW-0067">ATP-binding</keyword>
<keyword id="KW-0547">Nucleotide-binding</keyword>
<keyword id="KW-1185">Reference proteome</keyword>
<comment type="function">
    <text evidence="1 2">Polymerizes into bundles of filaments, forming a helix with a filament width of 5.5 nm and an axial repeating unit of 5.5 nm. Polymerization of Ta0583 requires NTP and is optimal with ATP, but GTP, UTP, CTP, and even the deoxy form of NTP can also support the polymerization reaction. Nucleoside diphosphate or AMP-PNP does not support polymerization.</text>
</comment>
<comment type="biophysicochemical properties">
    <kinetics>
        <KM evidence="1 2">289 uM for ATP (when assaying the ATPase activity)</KM>
    </kinetics>
    <phDependence>
        <text evidence="2">Optimum pH is 4.5-5.5 for the polymerization reaction.</text>
    </phDependence>
    <temperatureDependence>
        <text evidence="2">Optimum temperature is 50-56 degrees Celsius for the polymerization reaction.</text>
    </temperatureDependence>
</comment>
<comment type="miscellaneous">
    <text>Mg(2+) is required for polymerization. 4 mM MgCl(2) is sufficient to enhance the polymerization; however, higher concentrations of MgCl(2) suppresses polymerization. Polymerization is also suppressed by addition of NaCl, KCl or CaCl(2), with half suppression by about 100 mM, 10 mM and 18 mM, respectively.</text>
</comment>
<comment type="similarity">
    <text evidence="3">Belongs to the thermophilic archaeal actin family.</text>
</comment>